<protein>
    <recommendedName>
        <fullName evidence="1">Lysine--tRNA ligase</fullName>
        <ecNumber evidence="1">6.1.1.6</ecNumber>
    </recommendedName>
    <alternativeName>
        <fullName evidence="1">Lysyl-tRNA synthetase</fullName>
        <shortName evidence="1">LysRS</shortName>
    </alternativeName>
</protein>
<evidence type="ECO:0000255" key="1">
    <source>
        <dbReference type="HAMAP-Rule" id="MF_00252"/>
    </source>
</evidence>
<sequence>MADNKTENTLSSDATEVRAQKLKLLREQIGDVYPAHFHRSLTNAELATRYEGLDPDVETQDIVTVAGRVYSSRNSGMFMDIHDASGKIQIFSHKDVTGEEARALLPMIDIGDIIGVTGIVRRTKRGELTINAQKIEMLTKSLLPMPEKWHGLSDIELRYRKRHLDILTNEDSKLRFQQRSKIVSGIRRFMENDGFMEVETPMLQSIYGGATAEPFKTHHNTLKLDMYLRIAPELFLKRTLVSGLTDKVFEINRNFRNEGVSTRHNPEFTMMECYWAYADYEDMMDLVERLFETLALSIHGTTEFDFGDKRLSFKGPFKRVPMPDAVKEVTGIDFLAIKTDEEARAAAKAAGFAVEKDWTWGECLAFIFEEKVEATLIQPSHVTHFPKDISPFAKEVPGEPRLVERFETYCNAWELGNAFSELNDPEEQRRRMVEQLEQAHARGEKEKQLDEEFLDAIDQGMPPAGGLGIGVDRLIMLLTNAPSIRDVILFPARRSKAD</sequence>
<comment type="catalytic activity">
    <reaction evidence="1">
        <text>tRNA(Lys) + L-lysine + ATP = L-lysyl-tRNA(Lys) + AMP + diphosphate</text>
        <dbReference type="Rhea" id="RHEA:20792"/>
        <dbReference type="Rhea" id="RHEA-COMP:9696"/>
        <dbReference type="Rhea" id="RHEA-COMP:9697"/>
        <dbReference type="ChEBI" id="CHEBI:30616"/>
        <dbReference type="ChEBI" id="CHEBI:32551"/>
        <dbReference type="ChEBI" id="CHEBI:33019"/>
        <dbReference type="ChEBI" id="CHEBI:78442"/>
        <dbReference type="ChEBI" id="CHEBI:78529"/>
        <dbReference type="ChEBI" id="CHEBI:456215"/>
        <dbReference type="EC" id="6.1.1.6"/>
    </reaction>
</comment>
<comment type="cofactor">
    <cofactor evidence="1">
        <name>Mg(2+)</name>
        <dbReference type="ChEBI" id="CHEBI:18420"/>
    </cofactor>
    <text evidence="1">Binds 3 Mg(2+) ions per subunit.</text>
</comment>
<comment type="subunit">
    <text evidence="1">Homodimer.</text>
</comment>
<comment type="subcellular location">
    <subcellularLocation>
        <location evidence="1">Cytoplasm</location>
    </subcellularLocation>
</comment>
<comment type="similarity">
    <text evidence="1">Belongs to the class-II aminoacyl-tRNA synthetase family.</text>
</comment>
<accession>Q2K424</accession>
<feature type="chain" id="PRO_1000012920" description="Lysine--tRNA ligase">
    <location>
        <begin position="1"/>
        <end position="498"/>
    </location>
</feature>
<feature type="binding site" evidence="1">
    <location>
        <position position="407"/>
    </location>
    <ligand>
        <name>Mg(2+)</name>
        <dbReference type="ChEBI" id="CHEBI:18420"/>
        <label>1</label>
    </ligand>
</feature>
<feature type="binding site" evidence="1">
    <location>
        <position position="414"/>
    </location>
    <ligand>
        <name>Mg(2+)</name>
        <dbReference type="ChEBI" id="CHEBI:18420"/>
        <label>1</label>
    </ligand>
</feature>
<feature type="binding site" evidence="1">
    <location>
        <position position="414"/>
    </location>
    <ligand>
        <name>Mg(2+)</name>
        <dbReference type="ChEBI" id="CHEBI:18420"/>
        <label>2</label>
    </ligand>
</feature>
<proteinExistence type="inferred from homology"/>
<gene>
    <name evidence="1" type="primary">lysS</name>
    <name type="ordered locus">RHE_CH03657</name>
</gene>
<name>SYK_RHIEC</name>
<keyword id="KW-0030">Aminoacyl-tRNA synthetase</keyword>
<keyword id="KW-0067">ATP-binding</keyword>
<keyword id="KW-0963">Cytoplasm</keyword>
<keyword id="KW-0436">Ligase</keyword>
<keyword id="KW-0460">Magnesium</keyword>
<keyword id="KW-0479">Metal-binding</keyword>
<keyword id="KW-0547">Nucleotide-binding</keyword>
<keyword id="KW-0648">Protein biosynthesis</keyword>
<keyword id="KW-1185">Reference proteome</keyword>
<dbReference type="EC" id="6.1.1.6" evidence="1"/>
<dbReference type="EMBL" id="CP000133">
    <property type="protein sequence ID" value="ABC92412.1"/>
    <property type="molecule type" value="Genomic_DNA"/>
</dbReference>
<dbReference type="RefSeq" id="WP_011426870.1">
    <property type="nucleotide sequence ID" value="NC_007761.1"/>
</dbReference>
<dbReference type="SMR" id="Q2K424"/>
<dbReference type="KEGG" id="ret:RHE_CH03657"/>
<dbReference type="eggNOG" id="COG1190">
    <property type="taxonomic scope" value="Bacteria"/>
</dbReference>
<dbReference type="HOGENOM" id="CLU_008255_6_0_5"/>
<dbReference type="OrthoDB" id="9801152at2"/>
<dbReference type="Proteomes" id="UP000001936">
    <property type="component" value="Chromosome"/>
</dbReference>
<dbReference type="GO" id="GO:0005829">
    <property type="term" value="C:cytosol"/>
    <property type="evidence" value="ECO:0007669"/>
    <property type="project" value="TreeGrafter"/>
</dbReference>
<dbReference type="GO" id="GO:0005524">
    <property type="term" value="F:ATP binding"/>
    <property type="evidence" value="ECO:0007669"/>
    <property type="project" value="UniProtKB-UniRule"/>
</dbReference>
<dbReference type="GO" id="GO:0004824">
    <property type="term" value="F:lysine-tRNA ligase activity"/>
    <property type="evidence" value="ECO:0007669"/>
    <property type="project" value="UniProtKB-UniRule"/>
</dbReference>
<dbReference type="GO" id="GO:0000287">
    <property type="term" value="F:magnesium ion binding"/>
    <property type="evidence" value="ECO:0007669"/>
    <property type="project" value="UniProtKB-UniRule"/>
</dbReference>
<dbReference type="GO" id="GO:0000049">
    <property type="term" value="F:tRNA binding"/>
    <property type="evidence" value="ECO:0007669"/>
    <property type="project" value="TreeGrafter"/>
</dbReference>
<dbReference type="GO" id="GO:0006430">
    <property type="term" value="P:lysyl-tRNA aminoacylation"/>
    <property type="evidence" value="ECO:0007669"/>
    <property type="project" value="UniProtKB-UniRule"/>
</dbReference>
<dbReference type="CDD" id="cd00775">
    <property type="entry name" value="LysRS_core"/>
    <property type="match status" value="1"/>
</dbReference>
<dbReference type="CDD" id="cd04322">
    <property type="entry name" value="LysRS_N"/>
    <property type="match status" value="1"/>
</dbReference>
<dbReference type="Gene3D" id="3.30.930.10">
    <property type="entry name" value="Bira Bifunctional Protein, Domain 2"/>
    <property type="match status" value="1"/>
</dbReference>
<dbReference type="Gene3D" id="2.40.50.140">
    <property type="entry name" value="Nucleic acid-binding proteins"/>
    <property type="match status" value="1"/>
</dbReference>
<dbReference type="HAMAP" id="MF_00252">
    <property type="entry name" value="Lys_tRNA_synth_class2"/>
    <property type="match status" value="1"/>
</dbReference>
<dbReference type="InterPro" id="IPR004364">
    <property type="entry name" value="Aa-tRNA-synt_II"/>
</dbReference>
<dbReference type="InterPro" id="IPR006195">
    <property type="entry name" value="aa-tRNA-synth_II"/>
</dbReference>
<dbReference type="InterPro" id="IPR045864">
    <property type="entry name" value="aa-tRNA-synth_II/BPL/LPL"/>
</dbReference>
<dbReference type="InterPro" id="IPR002313">
    <property type="entry name" value="Lys-tRNA-ligase_II"/>
</dbReference>
<dbReference type="InterPro" id="IPR044136">
    <property type="entry name" value="Lys-tRNA-ligase_II_N"/>
</dbReference>
<dbReference type="InterPro" id="IPR018149">
    <property type="entry name" value="Lys-tRNA-synth_II_C"/>
</dbReference>
<dbReference type="InterPro" id="IPR012340">
    <property type="entry name" value="NA-bd_OB-fold"/>
</dbReference>
<dbReference type="InterPro" id="IPR004365">
    <property type="entry name" value="NA-bd_OB_tRNA"/>
</dbReference>
<dbReference type="NCBIfam" id="TIGR00499">
    <property type="entry name" value="lysS_bact"/>
    <property type="match status" value="1"/>
</dbReference>
<dbReference type="NCBIfam" id="NF001756">
    <property type="entry name" value="PRK00484.1"/>
    <property type="match status" value="1"/>
</dbReference>
<dbReference type="PANTHER" id="PTHR42918:SF15">
    <property type="entry name" value="LYSINE--TRNA LIGASE, CHLOROPLASTIC_MITOCHONDRIAL"/>
    <property type="match status" value="1"/>
</dbReference>
<dbReference type="PANTHER" id="PTHR42918">
    <property type="entry name" value="LYSYL-TRNA SYNTHETASE"/>
    <property type="match status" value="1"/>
</dbReference>
<dbReference type="Pfam" id="PF00152">
    <property type="entry name" value="tRNA-synt_2"/>
    <property type="match status" value="1"/>
</dbReference>
<dbReference type="Pfam" id="PF01336">
    <property type="entry name" value="tRNA_anti-codon"/>
    <property type="match status" value="1"/>
</dbReference>
<dbReference type="PRINTS" id="PR00982">
    <property type="entry name" value="TRNASYNTHLYS"/>
</dbReference>
<dbReference type="SUPFAM" id="SSF55681">
    <property type="entry name" value="Class II aaRS and biotin synthetases"/>
    <property type="match status" value="1"/>
</dbReference>
<dbReference type="SUPFAM" id="SSF50249">
    <property type="entry name" value="Nucleic acid-binding proteins"/>
    <property type="match status" value="1"/>
</dbReference>
<dbReference type="PROSITE" id="PS50862">
    <property type="entry name" value="AA_TRNA_LIGASE_II"/>
    <property type="match status" value="1"/>
</dbReference>
<organism>
    <name type="scientific">Rhizobium etli (strain ATCC 51251 / DSM 11541 / JCM 21823 / NBRC 15573 / CFN 42)</name>
    <dbReference type="NCBI Taxonomy" id="347834"/>
    <lineage>
        <taxon>Bacteria</taxon>
        <taxon>Pseudomonadati</taxon>
        <taxon>Pseudomonadota</taxon>
        <taxon>Alphaproteobacteria</taxon>
        <taxon>Hyphomicrobiales</taxon>
        <taxon>Rhizobiaceae</taxon>
        <taxon>Rhizobium/Agrobacterium group</taxon>
        <taxon>Rhizobium</taxon>
    </lineage>
</organism>
<reference key="1">
    <citation type="journal article" date="2006" name="Proc. Natl. Acad. Sci. U.S.A.">
        <title>The partitioned Rhizobium etli genome: genetic and metabolic redundancy in seven interacting replicons.</title>
        <authorList>
            <person name="Gonzalez V."/>
            <person name="Santamaria R.I."/>
            <person name="Bustos P."/>
            <person name="Hernandez-Gonzalez I."/>
            <person name="Medrano-Soto A."/>
            <person name="Moreno-Hagelsieb G."/>
            <person name="Janga S.C."/>
            <person name="Ramirez M.A."/>
            <person name="Jimenez-Jacinto V."/>
            <person name="Collado-Vides J."/>
            <person name="Davila G."/>
        </authorList>
    </citation>
    <scope>NUCLEOTIDE SEQUENCE [LARGE SCALE GENOMIC DNA]</scope>
    <source>
        <strain>ATCC 51251 / DSM 11541 / JCM 21823 / NBRC 15573 / CFN 42</strain>
    </source>
</reference>